<sequence length="363" mass="38475">MYGLTRSLLFQLSAERAHRLGMAGLHYLGRSRDLCESLREKALEGAPPGLAVEVAGLRFAHPVALAAGLDKDAEAVDGLFACGFSAVEIGTLTPRPQPGNPSPRLFRLPEHRALINRMGFNNHGATQAAARLRMQTWRPGPLGVNIGKNKDTPLEQAVDDYVACVDALAPLGDYVVVNASSPNTPGLRKLQEPEQLGQLLGAVQERLATVAPGKPLFLKIAPDLSPEAVDEVVDVARAQKLAGLIATNTTVARPFEHPLAKEAGGLSGAPVREPANAVIRRAWLRSGGALPIIGVGGVFTAQDVYEKLRAGASVVQVYTGFIYEGPGMVGNILPTLATLLARDGYKQVRDVIGAEHRKPGAPN</sequence>
<dbReference type="EC" id="1.3.5.2" evidence="1"/>
<dbReference type="EMBL" id="CP000113">
    <property type="protein sequence ID" value="ABF92496.1"/>
    <property type="molecule type" value="Genomic_DNA"/>
</dbReference>
<dbReference type="RefSeq" id="WP_011553084.1">
    <property type="nucleotide sequence ID" value="NC_008095.1"/>
</dbReference>
<dbReference type="SMR" id="Q1D7Y6"/>
<dbReference type="STRING" id="246197.MXAN_3028"/>
<dbReference type="EnsemblBacteria" id="ABF92496">
    <property type="protein sequence ID" value="ABF92496"/>
    <property type="gene ID" value="MXAN_3028"/>
</dbReference>
<dbReference type="GeneID" id="41360390"/>
<dbReference type="KEGG" id="mxa:MXAN_3028"/>
<dbReference type="eggNOG" id="COG0167">
    <property type="taxonomic scope" value="Bacteria"/>
</dbReference>
<dbReference type="HOGENOM" id="CLU_013640_4_0_7"/>
<dbReference type="OrthoDB" id="9802377at2"/>
<dbReference type="UniPathway" id="UPA00070">
    <property type="reaction ID" value="UER00946"/>
</dbReference>
<dbReference type="Proteomes" id="UP000002402">
    <property type="component" value="Chromosome"/>
</dbReference>
<dbReference type="GO" id="GO:0005737">
    <property type="term" value="C:cytoplasm"/>
    <property type="evidence" value="ECO:0007669"/>
    <property type="project" value="InterPro"/>
</dbReference>
<dbReference type="GO" id="GO:0005886">
    <property type="term" value="C:plasma membrane"/>
    <property type="evidence" value="ECO:0007669"/>
    <property type="project" value="UniProtKB-SubCell"/>
</dbReference>
<dbReference type="GO" id="GO:0106430">
    <property type="term" value="F:dihydroorotate dehydrogenase (quinone) activity"/>
    <property type="evidence" value="ECO:0007669"/>
    <property type="project" value="UniProtKB-EC"/>
</dbReference>
<dbReference type="GO" id="GO:0006207">
    <property type="term" value="P:'de novo' pyrimidine nucleobase biosynthetic process"/>
    <property type="evidence" value="ECO:0007669"/>
    <property type="project" value="InterPro"/>
</dbReference>
<dbReference type="GO" id="GO:0044205">
    <property type="term" value="P:'de novo' UMP biosynthetic process"/>
    <property type="evidence" value="ECO:0007669"/>
    <property type="project" value="UniProtKB-UniRule"/>
</dbReference>
<dbReference type="CDD" id="cd04738">
    <property type="entry name" value="DHOD_2_like"/>
    <property type="match status" value="1"/>
</dbReference>
<dbReference type="Gene3D" id="3.20.20.70">
    <property type="entry name" value="Aldolase class I"/>
    <property type="match status" value="1"/>
</dbReference>
<dbReference type="HAMAP" id="MF_00225">
    <property type="entry name" value="DHO_dh_type2"/>
    <property type="match status" value="1"/>
</dbReference>
<dbReference type="InterPro" id="IPR013785">
    <property type="entry name" value="Aldolase_TIM"/>
</dbReference>
<dbReference type="InterPro" id="IPR050074">
    <property type="entry name" value="DHO_dehydrogenase"/>
</dbReference>
<dbReference type="InterPro" id="IPR005719">
    <property type="entry name" value="Dihydroorotate_DH_2"/>
</dbReference>
<dbReference type="InterPro" id="IPR005720">
    <property type="entry name" value="Dihydroorotate_DH_cat"/>
</dbReference>
<dbReference type="InterPro" id="IPR001295">
    <property type="entry name" value="Dihydroorotate_DH_CS"/>
</dbReference>
<dbReference type="NCBIfam" id="NF003645">
    <property type="entry name" value="PRK05286.1-2"/>
    <property type="match status" value="1"/>
</dbReference>
<dbReference type="NCBIfam" id="NF003652">
    <property type="entry name" value="PRK05286.2-5"/>
    <property type="match status" value="1"/>
</dbReference>
<dbReference type="NCBIfam" id="TIGR01036">
    <property type="entry name" value="pyrD_sub2"/>
    <property type="match status" value="1"/>
</dbReference>
<dbReference type="PANTHER" id="PTHR48109:SF4">
    <property type="entry name" value="DIHYDROOROTATE DEHYDROGENASE (QUINONE), MITOCHONDRIAL"/>
    <property type="match status" value="1"/>
</dbReference>
<dbReference type="PANTHER" id="PTHR48109">
    <property type="entry name" value="DIHYDROOROTATE DEHYDROGENASE (QUINONE), MITOCHONDRIAL-RELATED"/>
    <property type="match status" value="1"/>
</dbReference>
<dbReference type="Pfam" id="PF01180">
    <property type="entry name" value="DHO_dh"/>
    <property type="match status" value="1"/>
</dbReference>
<dbReference type="SUPFAM" id="SSF51395">
    <property type="entry name" value="FMN-linked oxidoreductases"/>
    <property type="match status" value="1"/>
</dbReference>
<dbReference type="PROSITE" id="PS00911">
    <property type="entry name" value="DHODEHASE_1"/>
    <property type="match status" value="1"/>
</dbReference>
<dbReference type="PROSITE" id="PS00912">
    <property type="entry name" value="DHODEHASE_2"/>
    <property type="match status" value="1"/>
</dbReference>
<accession>Q1D7Y6</accession>
<name>PYRD_MYXXD</name>
<evidence type="ECO:0000255" key="1">
    <source>
        <dbReference type="HAMAP-Rule" id="MF_00225"/>
    </source>
</evidence>
<feature type="chain" id="PRO_1000024189" description="Dihydroorotate dehydrogenase (quinone)">
    <location>
        <begin position="1"/>
        <end position="363"/>
    </location>
</feature>
<feature type="active site" description="Nucleophile" evidence="1">
    <location>
        <position position="181"/>
    </location>
</feature>
<feature type="binding site" evidence="1">
    <location>
        <begin position="67"/>
        <end position="71"/>
    </location>
    <ligand>
        <name>FMN</name>
        <dbReference type="ChEBI" id="CHEBI:58210"/>
    </ligand>
</feature>
<feature type="binding site" evidence="1">
    <location>
        <position position="71"/>
    </location>
    <ligand>
        <name>substrate</name>
    </ligand>
</feature>
<feature type="binding site" evidence="1">
    <location>
        <position position="91"/>
    </location>
    <ligand>
        <name>FMN</name>
        <dbReference type="ChEBI" id="CHEBI:58210"/>
    </ligand>
</feature>
<feature type="binding site" evidence="1">
    <location>
        <begin position="116"/>
        <end position="120"/>
    </location>
    <ligand>
        <name>substrate</name>
    </ligand>
</feature>
<feature type="binding site" evidence="1">
    <location>
        <position position="145"/>
    </location>
    <ligand>
        <name>FMN</name>
        <dbReference type="ChEBI" id="CHEBI:58210"/>
    </ligand>
</feature>
<feature type="binding site" evidence="1">
    <location>
        <position position="178"/>
    </location>
    <ligand>
        <name>FMN</name>
        <dbReference type="ChEBI" id="CHEBI:58210"/>
    </ligand>
</feature>
<feature type="binding site" evidence="1">
    <location>
        <position position="178"/>
    </location>
    <ligand>
        <name>substrate</name>
    </ligand>
</feature>
<feature type="binding site" evidence="1">
    <location>
        <position position="183"/>
    </location>
    <ligand>
        <name>substrate</name>
    </ligand>
</feature>
<feature type="binding site" evidence="1">
    <location>
        <position position="219"/>
    </location>
    <ligand>
        <name>FMN</name>
        <dbReference type="ChEBI" id="CHEBI:58210"/>
    </ligand>
</feature>
<feature type="binding site" evidence="1">
    <location>
        <position position="247"/>
    </location>
    <ligand>
        <name>FMN</name>
        <dbReference type="ChEBI" id="CHEBI:58210"/>
    </ligand>
</feature>
<feature type="binding site" evidence="1">
    <location>
        <begin position="248"/>
        <end position="249"/>
    </location>
    <ligand>
        <name>substrate</name>
    </ligand>
</feature>
<feature type="binding site" evidence="1">
    <location>
        <position position="268"/>
    </location>
    <ligand>
        <name>FMN</name>
        <dbReference type="ChEBI" id="CHEBI:58210"/>
    </ligand>
</feature>
<feature type="binding site" evidence="1">
    <location>
        <position position="297"/>
    </location>
    <ligand>
        <name>FMN</name>
        <dbReference type="ChEBI" id="CHEBI:58210"/>
    </ligand>
</feature>
<feature type="binding site" evidence="1">
    <location>
        <begin position="318"/>
        <end position="319"/>
    </location>
    <ligand>
        <name>FMN</name>
        <dbReference type="ChEBI" id="CHEBI:58210"/>
    </ligand>
</feature>
<proteinExistence type="inferred from homology"/>
<reference key="1">
    <citation type="journal article" date="2006" name="Proc. Natl. Acad. Sci. U.S.A.">
        <title>Evolution of sensory complexity recorded in a myxobacterial genome.</title>
        <authorList>
            <person name="Goldman B.S."/>
            <person name="Nierman W.C."/>
            <person name="Kaiser D."/>
            <person name="Slater S.C."/>
            <person name="Durkin A.S."/>
            <person name="Eisen J.A."/>
            <person name="Ronning C.M."/>
            <person name="Barbazuk W.B."/>
            <person name="Blanchard M."/>
            <person name="Field C."/>
            <person name="Halling C."/>
            <person name="Hinkle G."/>
            <person name="Iartchuk O."/>
            <person name="Kim H.S."/>
            <person name="Mackenzie C."/>
            <person name="Madupu R."/>
            <person name="Miller N."/>
            <person name="Shvartsbeyn A."/>
            <person name="Sullivan S.A."/>
            <person name="Vaudin M."/>
            <person name="Wiegand R."/>
            <person name="Kaplan H.B."/>
        </authorList>
    </citation>
    <scope>NUCLEOTIDE SEQUENCE [LARGE SCALE GENOMIC DNA]</scope>
    <source>
        <strain>DK1622</strain>
    </source>
</reference>
<protein>
    <recommendedName>
        <fullName evidence="1">Dihydroorotate dehydrogenase (quinone)</fullName>
        <ecNumber evidence="1">1.3.5.2</ecNumber>
    </recommendedName>
    <alternativeName>
        <fullName evidence="1">DHOdehase</fullName>
        <shortName evidence="1">DHOD</shortName>
        <shortName evidence="1">DHODase</shortName>
    </alternativeName>
    <alternativeName>
        <fullName evidence="1">Dihydroorotate oxidase</fullName>
    </alternativeName>
</protein>
<organism>
    <name type="scientific">Myxococcus xanthus (strain DK1622)</name>
    <dbReference type="NCBI Taxonomy" id="246197"/>
    <lineage>
        <taxon>Bacteria</taxon>
        <taxon>Pseudomonadati</taxon>
        <taxon>Myxococcota</taxon>
        <taxon>Myxococcia</taxon>
        <taxon>Myxococcales</taxon>
        <taxon>Cystobacterineae</taxon>
        <taxon>Myxococcaceae</taxon>
        <taxon>Myxococcus</taxon>
    </lineage>
</organism>
<gene>
    <name evidence="1" type="primary">pyrD</name>
    <name type="ordered locus">MXAN_3028</name>
</gene>
<comment type="function">
    <text evidence="1">Catalyzes the conversion of dihydroorotate to orotate with quinone as electron acceptor.</text>
</comment>
<comment type="catalytic activity">
    <reaction evidence="1">
        <text>(S)-dihydroorotate + a quinone = orotate + a quinol</text>
        <dbReference type="Rhea" id="RHEA:30187"/>
        <dbReference type="ChEBI" id="CHEBI:24646"/>
        <dbReference type="ChEBI" id="CHEBI:30839"/>
        <dbReference type="ChEBI" id="CHEBI:30864"/>
        <dbReference type="ChEBI" id="CHEBI:132124"/>
        <dbReference type="EC" id="1.3.5.2"/>
    </reaction>
</comment>
<comment type="cofactor">
    <cofactor evidence="1">
        <name>FMN</name>
        <dbReference type="ChEBI" id="CHEBI:58210"/>
    </cofactor>
    <text evidence="1">Binds 1 FMN per subunit.</text>
</comment>
<comment type="pathway">
    <text evidence="1">Pyrimidine metabolism; UMP biosynthesis via de novo pathway; orotate from (S)-dihydroorotate (quinone route): step 1/1.</text>
</comment>
<comment type="subunit">
    <text evidence="1">Monomer.</text>
</comment>
<comment type="subcellular location">
    <subcellularLocation>
        <location evidence="1">Cell membrane</location>
        <topology evidence="1">Peripheral membrane protein</topology>
    </subcellularLocation>
</comment>
<comment type="similarity">
    <text evidence="1">Belongs to the dihydroorotate dehydrogenase family. Type 2 subfamily.</text>
</comment>
<keyword id="KW-1003">Cell membrane</keyword>
<keyword id="KW-0285">Flavoprotein</keyword>
<keyword id="KW-0288">FMN</keyword>
<keyword id="KW-0472">Membrane</keyword>
<keyword id="KW-0560">Oxidoreductase</keyword>
<keyword id="KW-0665">Pyrimidine biosynthesis</keyword>
<keyword id="KW-1185">Reference proteome</keyword>